<name>FTSH4_ORYSJ</name>
<organism>
    <name type="scientific">Oryza sativa subsp. japonica</name>
    <name type="common">Rice</name>
    <dbReference type="NCBI Taxonomy" id="39947"/>
    <lineage>
        <taxon>Eukaryota</taxon>
        <taxon>Viridiplantae</taxon>
        <taxon>Streptophyta</taxon>
        <taxon>Embryophyta</taxon>
        <taxon>Tracheophyta</taxon>
        <taxon>Spermatophyta</taxon>
        <taxon>Magnoliopsida</taxon>
        <taxon>Liliopsida</taxon>
        <taxon>Poales</taxon>
        <taxon>Poaceae</taxon>
        <taxon>BOP clade</taxon>
        <taxon>Oryzoideae</taxon>
        <taxon>Oryzeae</taxon>
        <taxon>Oryzinae</taxon>
        <taxon>Oryza</taxon>
        <taxon>Oryza sativa</taxon>
    </lineage>
</organism>
<sequence>MAWRRVLSQLARSRPASTIYNELITSRPSWLLRGDVNGGGTLKNLNERYQSSFVGSLARRVQNLDVPSEASLLKEIYKSDPERVIQIFESQPWLHSNRLALSEYVKALVKVDRLDDSTLLKTLRRGMAVSGGEGERVGSSSALKSAGQATKDGILGTANAPIHMVTSETGHFKDQIWRTFRSLALTFLVISGIGALIEDRGISKGLGLSQEVQPIMDSKTKFSDVKGVDEAKAELEEIVHYLRDPKRFTHLGGKLPKGVLLVGPPGTGKTMLARAVAGEAGVPFFSCSGSEFEEMFVGVGARRVRDLFAAAKKRSPCIIFMDEIDAIGGSRNPKDQQYMRMTLNQLLVELDGFKQNEGIIVIAATNFPQSLDKALVRPGRFDRHIVVPNPDVEGRRQILESHMLKVLKSDDVDLMIIARGTPGFSGADLANLVNVAALKAAMDGAKAVTMNDLEYAKDRIMMGSERKSAVISDESRKLTAYHEGGHALVAIHTEGARPVHKATIVPRGRTLGMVSQLPEKDETSFSRKQMLAWLDVSMAGRVAEELIFGDSEVTSGASSDFQNATKMARAMVTKYGMSKQLGFVSYNYEDDGKSMSTETRLLIEQEVKSLLENAYNNAKTILTKHSKEHHVLAQALLEHETLTGAQIKKILAQANSTQQQQEHAVEAPRKTPAAPSSPAASAAAAAAATAAAAAKQAAAKAKGVAGIGS</sequence>
<protein>
    <recommendedName>
        <fullName>ATP-dependent zinc metalloprotease FTSH 4, mitochondrial</fullName>
        <shortName>OsFTSH4</shortName>
        <ecNumber>3.4.24.-</ecNumber>
    </recommendedName>
</protein>
<feature type="transit peptide" description="Mitochondrion" evidence="2">
    <location>
        <begin position="1"/>
        <end position="15"/>
    </location>
</feature>
<feature type="chain" id="PRO_0000341340" description="ATP-dependent zinc metalloprotease FTSH 4, mitochondrial">
    <location>
        <begin position="16"/>
        <end position="709"/>
    </location>
</feature>
<feature type="region of interest" description="Disordered" evidence="3">
    <location>
        <begin position="655"/>
        <end position="682"/>
    </location>
</feature>
<feature type="compositionally biased region" description="Low complexity" evidence="3">
    <location>
        <begin position="670"/>
        <end position="682"/>
    </location>
</feature>
<feature type="active site" evidence="1">
    <location>
        <position position="483"/>
    </location>
</feature>
<feature type="binding site" evidence="2">
    <location>
        <begin position="263"/>
        <end position="270"/>
    </location>
    <ligand>
        <name>ATP</name>
        <dbReference type="ChEBI" id="CHEBI:30616"/>
    </ligand>
</feature>
<feature type="binding site" evidence="1">
    <location>
        <position position="482"/>
    </location>
    <ligand>
        <name>Zn(2+)</name>
        <dbReference type="ChEBI" id="CHEBI:29105"/>
        <note>catalytic</note>
    </ligand>
</feature>
<feature type="binding site" evidence="1">
    <location>
        <position position="486"/>
    </location>
    <ligand>
        <name>Zn(2+)</name>
        <dbReference type="ChEBI" id="CHEBI:29105"/>
        <note>catalytic</note>
    </ligand>
</feature>
<feature type="binding site" evidence="1">
    <location>
        <position position="560"/>
    </location>
    <ligand>
        <name>Zn(2+)</name>
        <dbReference type="ChEBI" id="CHEBI:29105"/>
        <note>catalytic</note>
    </ligand>
</feature>
<dbReference type="EC" id="3.4.24.-"/>
<dbReference type="EMBL" id="AP003413">
    <property type="protein sequence ID" value="BAB91902.1"/>
    <property type="molecule type" value="Genomic_DNA"/>
</dbReference>
<dbReference type="EMBL" id="AP008207">
    <property type="protein sequence ID" value="BAF05298.1"/>
    <property type="molecule type" value="Genomic_DNA"/>
</dbReference>
<dbReference type="EMBL" id="AP014957">
    <property type="protein sequence ID" value="BAS72810.1"/>
    <property type="molecule type" value="Genomic_DNA"/>
</dbReference>
<dbReference type="EMBL" id="CM000138">
    <property type="protein sequence ID" value="EAZ12415.1"/>
    <property type="molecule type" value="Genomic_DNA"/>
</dbReference>
<dbReference type="RefSeq" id="XP_015621656.1">
    <property type="nucleotide sequence ID" value="XM_015766170.1"/>
</dbReference>
<dbReference type="SMR" id="Q8LQJ9"/>
<dbReference type="FunCoup" id="Q8LQJ9">
    <property type="interactions" value="2971"/>
</dbReference>
<dbReference type="STRING" id="39947.Q8LQJ9"/>
<dbReference type="MEROPS" id="M41.026"/>
<dbReference type="PaxDb" id="39947-Q8LQJ9"/>
<dbReference type="EnsemblPlants" id="Os01t0574400-01">
    <property type="protein sequence ID" value="Os01t0574400-01"/>
    <property type="gene ID" value="Os01g0574400"/>
</dbReference>
<dbReference type="Gramene" id="Os01t0574400-01">
    <property type="protein sequence ID" value="Os01t0574400-01"/>
    <property type="gene ID" value="Os01g0574400"/>
</dbReference>
<dbReference type="KEGG" id="dosa:Os01g0574400"/>
<dbReference type="eggNOG" id="KOG0734">
    <property type="taxonomic scope" value="Eukaryota"/>
</dbReference>
<dbReference type="HOGENOM" id="CLU_000688_9_3_1"/>
<dbReference type="InParanoid" id="Q8LQJ9"/>
<dbReference type="OMA" id="WLDVSMA"/>
<dbReference type="OrthoDB" id="1413014at2759"/>
<dbReference type="Proteomes" id="UP000000763">
    <property type="component" value="Chromosome 1"/>
</dbReference>
<dbReference type="Proteomes" id="UP000007752">
    <property type="component" value="Chromosome 1"/>
</dbReference>
<dbReference type="Proteomes" id="UP000059680">
    <property type="component" value="Chromosome 1"/>
</dbReference>
<dbReference type="ExpressionAtlas" id="Q8LQJ9">
    <property type="expression patterns" value="baseline and differential"/>
</dbReference>
<dbReference type="GO" id="GO:0009507">
    <property type="term" value="C:chloroplast"/>
    <property type="evidence" value="ECO:0000318"/>
    <property type="project" value="GO_Central"/>
</dbReference>
<dbReference type="GO" id="GO:0016020">
    <property type="term" value="C:membrane"/>
    <property type="evidence" value="ECO:0007669"/>
    <property type="project" value="InterPro"/>
</dbReference>
<dbReference type="GO" id="GO:0005739">
    <property type="term" value="C:mitochondrion"/>
    <property type="evidence" value="ECO:0007669"/>
    <property type="project" value="UniProtKB-SubCell"/>
</dbReference>
<dbReference type="GO" id="GO:0005524">
    <property type="term" value="F:ATP binding"/>
    <property type="evidence" value="ECO:0007669"/>
    <property type="project" value="UniProtKB-KW"/>
</dbReference>
<dbReference type="GO" id="GO:0016887">
    <property type="term" value="F:ATP hydrolysis activity"/>
    <property type="evidence" value="ECO:0007669"/>
    <property type="project" value="InterPro"/>
</dbReference>
<dbReference type="GO" id="GO:0004176">
    <property type="term" value="F:ATP-dependent peptidase activity"/>
    <property type="evidence" value="ECO:0000318"/>
    <property type="project" value="GO_Central"/>
</dbReference>
<dbReference type="GO" id="GO:0046872">
    <property type="term" value="F:metal ion binding"/>
    <property type="evidence" value="ECO:0007669"/>
    <property type="project" value="UniProtKB-KW"/>
</dbReference>
<dbReference type="GO" id="GO:0004222">
    <property type="term" value="F:metalloendopeptidase activity"/>
    <property type="evidence" value="ECO:0007669"/>
    <property type="project" value="InterPro"/>
</dbReference>
<dbReference type="GO" id="GO:0045037">
    <property type="term" value="P:protein import into chloroplast stroma"/>
    <property type="evidence" value="ECO:0000318"/>
    <property type="project" value="GO_Central"/>
</dbReference>
<dbReference type="GO" id="GO:0006508">
    <property type="term" value="P:proteolysis"/>
    <property type="evidence" value="ECO:0000318"/>
    <property type="project" value="GO_Central"/>
</dbReference>
<dbReference type="CDD" id="cd19501">
    <property type="entry name" value="RecA-like_FtsH"/>
    <property type="match status" value="1"/>
</dbReference>
<dbReference type="FunFam" id="1.10.8.60:FF:000001">
    <property type="entry name" value="ATP-dependent zinc metalloprotease FtsH"/>
    <property type="match status" value="1"/>
</dbReference>
<dbReference type="FunFam" id="1.20.58.760:FF:000002">
    <property type="entry name" value="ATP-dependent zinc metalloprotease FtsH"/>
    <property type="match status" value="1"/>
</dbReference>
<dbReference type="FunFam" id="3.40.50.300:FF:000175">
    <property type="entry name" value="ATP-dependent zinc metalloprotease FTSH 4"/>
    <property type="match status" value="1"/>
</dbReference>
<dbReference type="Gene3D" id="1.10.8.60">
    <property type="match status" value="1"/>
</dbReference>
<dbReference type="Gene3D" id="3.40.50.300">
    <property type="entry name" value="P-loop containing nucleotide triphosphate hydrolases"/>
    <property type="match status" value="1"/>
</dbReference>
<dbReference type="Gene3D" id="1.20.58.760">
    <property type="entry name" value="Peptidase M41"/>
    <property type="match status" value="1"/>
</dbReference>
<dbReference type="HAMAP" id="MF_01458">
    <property type="entry name" value="FtsH"/>
    <property type="match status" value="1"/>
</dbReference>
<dbReference type="InterPro" id="IPR003593">
    <property type="entry name" value="AAA+_ATPase"/>
</dbReference>
<dbReference type="InterPro" id="IPR041569">
    <property type="entry name" value="AAA_lid_3"/>
</dbReference>
<dbReference type="InterPro" id="IPR003959">
    <property type="entry name" value="ATPase_AAA_core"/>
</dbReference>
<dbReference type="InterPro" id="IPR003960">
    <property type="entry name" value="ATPase_AAA_CS"/>
</dbReference>
<dbReference type="InterPro" id="IPR005936">
    <property type="entry name" value="FtsH"/>
</dbReference>
<dbReference type="InterPro" id="IPR027417">
    <property type="entry name" value="P-loop_NTPase"/>
</dbReference>
<dbReference type="InterPro" id="IPR000642">
    <property type="entry name" value="Peptidase_M41"/>
</dbReference>
<dbReference type="InterPro" id="IPR037219">
    <property type="entry name" value="Peptidase_M41-like"/>
</dbReference>
<dbReference type="NCBIfam" id="TIGR01241">
    <property type="entry name" value="FtsH_fam"/>
    <property type="match status" value="1"/>
</dbReference>
<dbReference type="PANTHER" id="PTHR23076:SF37">
    <property type="entry name" value="ATP-DEPENDENT ZINC METALLOPROTEASE FTSH 4, MITOCHONDRIAL"/>
    <property type="match status" value="1"/>
</dbReference>
<dbReference type="PANTHER" id="PTHR23076">
    <property type="entry name" value="METALLOPROTEASE M41 FTSH"/>
    <property type="match status" value="1"/>
</dbReference>
<dbReference type="Pfam" id="PF00004">
    <property type="entry name" value="AAA"/>
    <property type="match status" value="1"/>
</dbReference>
<dbReference type="Pfam" id="PF17862">
    <property type="entry name" value="AAA_lid_3"/>
    <property type="match status" value="1"/>
</dbReference>
<dbReference type="Pfam" id="PF01434">
    <property type="entry name" value="Peptidase_M41"/>
    <property type="match status" value="1"/>
</dbReference>
<dbReference type="SMART" id="SM00382">
    <property type="entry name" value="AAA"/>
    <property type="match status" value="1"/>
</dbReference>
<dbReference type="SUPFAM" id="SSF140990">
    <property type="entry name" value="FtsH protease domain-like"/>
    <property type="match status" value="1"/>
</dbReference>
<dbReference type="SUPFAM" id="SSF52540">
    <property type="entry name" value="P-loop containing nucleoside triphosphate hydrolases"/>
    <property type="match status" value="1"/>
</dbReference>
<dbReference type="PROSITE" id="PS00674">
    <property type="entry name" value="AAA"/>
    <property type="match status" value="1"/>
</dbReference>
<proteinExistence type="inferred from homology"/>
<gene>
    <name type="primary">FTSH4</name>
    <name type="ordered locus">Os01g0574400</name>
    <name type="ordered locus">LOC_Os01g39250</name>
    <name type="ORF">B1151A10.24-2</name>
    <name type="ORF">OsJ_002240</name>
</gene>
<reference key="1">
    <citation type="journal article" date="2002" name="Nature">
        <title>The genome sequence and structure of rice chromosome 1.</title>
        <authorList>
            <person name="Sasaki T."/>
            <person name="Matsumoto T."/>
            <person name="Yamamoto K."/>
            <person name="Sakata K."/>
            <person name="Baba T."/>
            <person name="Katayose Y."/>
            <person name="Wu J."/>
            <person name="Niimura Y."/>
            <person name="Cheng Z."/>
            <person name="Nagamura Y."/>
            <person name="Antonio B.A."/>
            <person name="Kanamori H."/>
            <person name="Hosokawa S."/>
            <person name="Masukawa M."/>
            <person name="Arikawa K."/>
            <person name="Chiden Y."/>
            <person name="Hayashi M."/>
            <person name="Okamoto M."/>
            <person name="Ando T."/>
            <person name="Aoki H."/>
            <person name="Arita K."/>
            <person name="Hamada M."/>
            <person name="Harada C."/>
            <person name="Hijishita S."/>
            <person name="Honda M."/>
            <person name="Ichikawa Y."/>
            <person name="Idonuma A."/>
            <person name="Iijima M."/>
            <person name="Ikeda M."/>
            <person name="Ikeno M."/>
            <person name="Ito S."/>
            <person name="Ito T."/>
            <person name="Ito Y."/>
            <person name="Ito Y."/>
            <person name="Iwabuchi A."/>
            <person name="Kamiya K."/>
            <person name="Karasawa W."/>
            <person name="Katagiri S."/>
            <person name="Kikuta A."/>
            <person name="Kobayashi N."/>
            <person name="Kono I."/>
            <person name="Machita K."/>
            <person name="Maehara T."/>
            <person name="Mizuno H."/>
            <person name="Mizubayashi T."/>
            <person name="Mukai Y."/>
            <person name="Nagasaki H."/>
            <person name="Nakashima M."/>
            <person name="Nakama Y."/>
            <person name="Nakamichi Y."/>
            <person name="Nakamura M."/>
            <person name="Namiki N."/>
            <person name="Negishi M."/>
            <person name="Ohta I."/>
            <person name="Ono N."/>
            <person name="Saji S."/>
            <person name="Sakai K."/>
            <person name="Shibata M."/>
            <person name="Shimokawa T."/>
            <person name="Shomura A."/>
            <person name="Song J."/>
            <person name="Takazaki Y."/>
            <person name="Terasawa K."/>
            <person name="Tsuji K."/>
            <person name="Waki K."/>
            <person name="Yamagata H."/>
            <person name="Yamane H."/>
            <person name="Yoshiki S."/>
            <person name="Yoshihara R."/>
            <person name="Yukawa K."/>
            <person name="Zhong H."/>
            <person name="Iwama H."/>
            <person name="Endo T."/>
            <person name="Ito H."/>
            <person name="Hahn J.H."/>
            <person name="Kim H.-I."/>
            <person name="Eun M.-Y."/>
            <person name="Yano M."/>
            <person name="Jiang J."/>
            <person name="Gojobori T."/>
        </authorList>
    </citation>
    <scope>NUCLEOTIDE SEQUENCE [LARGE SCALE GENOMIC DNA]</scope>
    <source>
        <strain>cv. Nipponbare</strain>
    </source>
</reference>
<reference key="2">
    <citation type="journal article" date="2005" name="Nature">
        <title>The map-based sequence of the rice genome.</title>
        <authorList>
            <consortium name="International rice genome sequencing project (IRGSP)"/>
        </authorList>
    </citation>
    <scope>NUCLEOTIDE SEQUENCE [LARGE SCALE GENOMIC DNA]</scope>
    <source>
        <strain>cv. Nipponbare</strain>
    </source>
</reference>
<reference key="3">
    <citation type="journal article" date="2008" name="Nucleic Acids Res.">
        <title>The rice annotation project database (RAP-DB): 2008 update.</title>
        <authorList>
            <consortium name="The rice annotation project (RAP)"/>
        </authorList>
    </citation>
    <scope>GENOME REANNOTATION</scope>
    <source>
        <strain>cv. Nipponbare</strain>
    </source>
</reference>
<reference key="4">
    <citation type="journal article" date="2013" name="Rice">
        <title>Improvement of the Oryza sativa Nipponbare reference genome using next generation sequence and optical map data.</title>
        <authorList>
            <person name="Kawahara Y."/>
            <person name="de la Bastide M."/>
            <person name="Hamilton J.P."/>
            <person name="Kanamori H."/>
            <person name="McCombie W.R."/>
            <person name="Ouyang S."/>
            <person name="Schwartz D.C."/>
            <person name="Tanaka T."/>
            <person name="Wu J."/>
            <person name="Zhou S."/>
            <person name="Childs K.L."/>
            <person name="Davidson R.M."/>
            <person name="Lin H."/>
            <person name="Quesada-Ocampo L."/>
            <person name="Vaillancourt B."/>
            <person name="Sakai H."/>
            <person name="Lee S.S."/>
            <person name="Kim J."/>
            <person name="Numa H."/>
            <person name="Itoh T."/>
            <person name="Buell C.R."/>
            <person name="Matsumoto T."/>
        </authorList>
    </citation>
    <scope>GENOME REANNOTATION</scope>
    <source>
        <strain>cv. Nipponbare</strain>
    </source>
</reference>
<reference key="5">
    <citation type="journal article" date="2005" name="PLoS Biol.">
        <title>The genomes of Oryza sativa: a history of duplications.</title>
        <authorList>
            <person name="Yu J."/>
            <person name="Wang J."/>
            <person name="Lin W."/>
            <person name="Li S."/>
            <person name="Li H."/>
            <person name="Zhou J."/>
            <person name="Ni P."/>
            <person name="Dong W."/>
            <person name="Hu S."/>
            <person name="Zeng C."/>
            <person name="Zhang J."/>
            <person name="Zhang Y."/>
            <person name="Li R."/>
            <person name="Xu Z."/>
            <person name="Li S."/>
            <person name="Li X."/>
            <person name="Zheng H."/>
            <person name="Cong L."/>
            <person name="Lin L."/>
            <person name="Yin J."/>
            <person name="Geng J."/>
            <person name="Li G."/>
            <person name="Shi J."/>
            <person name="Liu J."/>
            <person name="Lv H."/>
            <person name="Li J."/>
            <person name="Wang J."/>
            <person name="Deng Y."/>
            <person name="Ran L."/>
            <person name="Shi X."/>
            <person name="Wang X."/>
            <person name="Wu Q."/>
            <person name="Li C."/>
            <person name="Ren X."/>
            <person name="Wang J."/>
            <person name="Wang X."/>
            <person name="Li D."/>
            <person name="Liu D."/>
            <person name="Zhang X."/>
            <person name="Ji Z."/>
            <person name="Zhao W."/>
            <person name="Sun Y."/>
            <person name="Zhang Z."/>
            <person name="Bao J."/>
            <person name="Han Y."/>
            <person name="Dong L."/>
            <person name="Ji J."/>
            <person name="Chen P."/>
            <person name="Wu S."/>
            <person name="Liu J."/>
            <person name="Xiao Y."/>
            <person name="Bu D."/>
            <person name="Tan J."/>
            <person name="Yang L."/>
            <person name="Ye C."/>
            <person name="Zhang J."/>
            <person name="Xu J."/>
            <person name="Zhou Y."/>
            <person name="Yu Y."/>
            <person name="Zhang B."/>
            <person name="Zhuang S."/>
            <person name="Wei H."/>
            <person name="Liu B."/>
            <person name="Lei M."/>
            <person name="Yu H."/>
            <person name="Li Y."/>
            <person name="Xu H."/>
            <person name="Wei S."/>
            <person name="He X."/>
            <person name="Fang L."/>
            <person name="Zhang Z."/>
            <person name="Zhang Y."/>
            <person name="Huang X."/>
            <person name="Su Z."/>
            <person name="Tong W."/>
            <person name="Li J."/>
            <person name="Tong Z."/>
            <person name="Li S."/>
            <person name="Ye J."/>
            <person name="Wang L."/>
            <person name="Fang L."/>
            <person name="Lei T."/>
            <person name="Chen C.-S."/>
            <person name="Chen H.-C."/>
            <person name="Xu Z."/>
            <person name="Li H."/>
            <person name="Huang H."/>
            <person name="Zhang F."/>
            <person name="Xu H."/>
            <person name="Li N."/>
            <person name="Zhao C."/>
            <person name="Li S."/>
            <person name="Dong L."/>
            <person name="Huang Y."/>
            <person name="Li L."/>
            <person name="Xi Y."/>
            <person name="Qi Q."/>
            <person name="Li W."/>
            <person name="Zhang B."/>
            <person name="Hu W."/>
            <person name="Zhang Y."/>
            <person name="Tian X."/>
            <person name="Jiao Y."/>
            <person name="Liang X."/>
            <person name="Jin J."/>
            <person name="Gao L."/>
            <person name="Zheng W."/>
            <person name="Hao B."/>
            <person name="Liu S.-M."/>
            <person name="Wang W."/>
            <person name="Yuan L."/>
            <person name="Cao M."/>
            <person name="McDermott J."/>
            <person name="Samudrala R."/>
            <person name="Wang J."/>
            <person name="Wong G.K.-S."/>
            <person name="Yang H."/>
        </authorList>
    </citation>
    <scope>NUCLEOTIDE SEQUENCE [LARGE SCALE GENOMIC DNA]</scope>
    <source>
        <strain>cv. Nipponbare</strain>
    </source>
</reference>
<reference key="6">
    <citation type="journal article" date="2005" name="Plant Physiol.">
        <title>Functional redundancy of AtFtsH metalloproteases in thylakoid membrane complexes.</title>
        <authorList>
            <person name="Yu F."/>
            <person name="Park S."/>
            <person name="Rodermel S.R."/>
        </authorList>
    </citation>
    <scope>GENE FAMILY</scope>
    <scope>NOMENCLATURE</scope>
</reference>
<evidence type="ECO:0000250" key="1"/>
<evidence type="ECO:0000255" key="2"/>
<evidence type="ECO:0000256" key="3">
    <source>
        <dbReference type="SAM" id="MobiDB-lite"/>
    </source>
</evidence>
<evidence type="ECO:0000305" key="4"/>
<accession>Q8LQJ9</accession>
<accession>A0A0P0V4D2</accession>
<keyword id="KW-0067">ATP-binding</keyword>
<keyword id="KW-0378">Hydrolase</keyword>
<keyword id="KW-0479">Metal-binding</keyword>
<keyword id="KW-0482">Metalloprotease</keyword>
<keyword id="KW-0496">Mitochondrion</keyword>
<keyword id="KW-0547">Nucleotide-binding</keyword>
<keyword id="KW-0645">Protease</keyword>
<keyword id="KW-1185">Reference proteome</keyword>
<keyword id="KW-0809">Transit peptide</keyword>
<keyword id="KW-0862">Zinc</keyword>
<comment type="function">
    <text evidence="1">Probable ATP-dependent zinc metallopeptidase.</text>
</comment>
<comment type="cofactor">
    <cofactor evidence="1">
        <name>Zn(2+)</name>
        <dbReference type="ChEBI" id="CHEBI:29105"/>
    </cofactor>
    <text evidence="1">Binds 1 zinc ion per subunit.</text>
</comment>
<comment type="subcellular location">
    <subcellularLocation>
        <location evidence="1">Mitochondrion</location>
    </subcellularLocation>
</comment>
<comment type="similarity">
    <text evidence="4">In the N-terminal section; belongs to the AAA ATPase family.</text>
</comment>
<comment type="similarity">
    <text evidence="4">In the C-terminal section; belongs to the peptidase M41 family.</text>
</comment>